<comment type="function">
    <text evidence="1">Participates actively in the response to hyperosmotic and heat shock by preventing the aggregation of stress-denatured proteins, in association with DnaK and GrpE. It is the nucleotide exchange factor for DnaK and may function as a thermosensor. Unfolded proteins bind initially to DnaJ; upon interaction with the DnaJ-bound protein, DnaK hydrolyzes its bound ATP, resulting in the formation of a stable complex. GrpE releases ADP from DnaK; ATP binding to DnaK triggers the release of the substrate protein, thus completing the reaction cycle. Several rounds of ATP-dependent interactions between DnaJ, DnaK and GrpE are required for fully efficient folding.</text>
</comment>
<comment type="subunit">
    <text evidence="1">Homodimer.</text>
</comment>
<comment type="subcellular location">
    <subcellularLocation>
        <location evidence="1">Cytoplasm</location>
    </subcellularLocation>
</comment>
<comment type="similarity">
    <text evidence="1">Belongs to the GrpE family.</text>
</comment>
<accession>A5TZ78</accession>
<organism>
    <name type="scientific">Mycobacterium tuberculosis (strain ATCC 25177 / H37Ra)</name>
    <dbReference type="NCBI Taxonomy" id="419947"/>
    <lineage>
        <taxon>Bacteria</taxon>
        <taxon>Bacillati</taxon>
        <taxon>Actinomycetota</taxon>
        <taxon>Actinomycetes</taxon>
        <taxon>Mycobacteriales</taxon>
        <taxon>Mycobacteriaceae</taxon>
        <taxon>Mycobacterium</taxon>
        <taxon>Mycobacterium tuberculosis complex</taxon>
    </lineage>
</organism>
<dbReference type="EMBL" id="CP000611">
    <property type="protein sequence ID" value="ABQ72078.1"/>
    <property type="molecule type" value="Genomic_DNA"/>
</dbReference>
<dbReference type="RefSeq" id="WP_003401817.1">
    <property type="nucleotide sequence ID" value="NZ_CP016972.1"/>
</dbReference>
<dbReference type="SMR" id="A5TZ78"/>
<dbReference type="GeneID" id="45424317"/>
<dbReference type="KEGG" id="mra:MRA_0360"/>
<dbReference type="eggNOG" id="COG0576">
    <property type="taxonomic scope" value="Bacteria"/>
</dbReference>
<dbReference type="HOGENOM" id="CLU_057217_4_1_11"/>
<dbReference type="Proteomes" id="UP000001988">
    <property type="component" value="Chromosome"/>
</dbReference>
<dbReference type="GO" id="GO:0005737">
    <property type="term" value="C:cytoplasm"/>
    <property type="evidence" value="ECO:0007669"/>
    <property type="project" value="UniProtKB-SubCell"/>
</dbReference>
<dbReference type="GO" id="GO:0000774">
    <property type="term" value="F:adenyl-nucleotide exchange factor activity"/>
    <property type="evidence" value="ECO:0007669"/>
    <property type="project" value="InterPro"/>
</dbReference>
<dbReference type="GO" id="GO:0042803">
    <property type="term" value="F:protein homodimerization activity"/>
    <property type="evidence" value="ECO:0007669"/>
    <property type="project" value="InterPro"/>
</dbReference>
<dbReference type="GO" id="GO:0051087">
    <property type="term" value="F:protein-folding chaperone binding"/>
    <property type="evidence" value="ECO:0007669"/>
    <property type="project" value="InterPro"/>
</dbReference>
<dbReference type="GO" id="GO:0051082">
    <property type="term" value="F:unfolded protein binding"/>
    <property type="evidence" value="ECO:0007669"/>
    <property type="project" value="TreeGrafter"/>
</dbReference>
<dbReference type="GO" id="GO:0006457">
    <property type="term" value="P:protein folding"/>
    <property type="evidence" value="ECO:0007669"/>
    <property type="project" value="InterPro"/>
</dbReference>
<dbReference type="CDD" id="cd00446">
    <property type="entry name" value="GrpE"/>
    <property type="match status" value="1"/>
</dbReference>
<dbReference type="FunFam" id="2.30.22.10:FF:000007">
    <property type="entry name" value="Protein GrpE"/>
    <property type="match status" value="1"/>
</dbReference>
<dbReference type="FunFam" id="3.90.20.20:FF:000010">
    <property type="entry name" value="Protein GrpE"/>
    <property type="match status" value="1"/>
</dbReference>
<dbReference type="Gene3D" id="3.90.20.20">
    <property type="match status" value="1"/>
</dbReference>
<dbReference type="Gene3D" id="2.30.22.10">
    <property type="entry name" value="Head domain of nucleotide exchange factor GrpE"/>
    <property type="match status" value="1"/>
</dbReference>
<dbReference type="HAMAP" id="MF_01151">
    <property type="entry name" value="GrpE"/>
    <property type="match status" value="1"/>
</dbReference>
<dbReference type="InterPro" id="IPR000740">
    <property type="entry name" value="GrpE"/>
</dbReference>
<dbReference type="InterPro" id="IPR013805">
    <property type="entry name" value="GrpE_coiled_coil"/>
</dbReference>
<dbReference type="InterPro" id="IPR009012">
    <property type="entry name" value="GrpE_head"/>
</dbReference>
<dbReference type="NCBIfam" id="NF010740">
    <property type="entry name" value="PRK14142.1"/>
    <property type="match status" value="1"/>
</dbReference>
<dbReference type="NCBIfam" id="NF010761">
    <property type="entry name" value="PRK14164.1"/>
    <property type="match status" value="1"/>
</dbReference>
<dbReference type="PANTHER" id="PTHR21237">
    <property type="entry name" value="GRPE PROTEIN"/>
    <property type="match status" value="1"/>
</dbReference>
<dbReference type="PANTHER" id="PTHR21237:SF23">
    <property type="entry name" value="GRPE PROTEIN HOMOLOG, MITOCHONDRIAL"/>
    <property type="match status" value="1"/>
</dbReference>
<dbReference type="Pfam" id="PF01025">
    <property type="entry name" value="GrpE"/>
    <property type="match status" value="1"/>
</dbReference>
<dbReference type="PRINTS" id="PR00773">
    <property type="entry name" value="GRPEPROTEIN"/>
</dbReference>
<dbReference type="SUPFAM" id="SSF58014">
    <property type="entry name" value="Coiled-coil domain of nucleotide exchange factor GrpE"/>
    <property type="match status" value="1"/>
</dbReference>
<dbReference type="SUPFAM" id="SSF51064">
    <property type="entry name" value="Head domain of nucleotide exchange factor GrpE"/>
    <property type="match status" value="1"/>
</dbReference>
<dbReference type="PROSITE" id="PS01071">
    <property type="entry name" value="GRPE"/>
    <property type="match status" value="1"/>
</dbReference>
<keyword id="KW-0143">Chaperone</keyword>
<keyword id="KW-0963">Cytoplasm</keyword>
<keyword id="KW-1185">Reference proteome</keyword>
<keyword id="KW-0346">Stress response</keyword>
<name>GRPE_MYCTA</name>
<proteinExistence type="inferred from homology"/>
<feature type="chain" id="PRO_1000164206" description="Protein GrpE">
    <location>
        <begin position="1"/>
        <end position="235"/>
    </location>
</feature>
<feature type="region of interest" description="Disordered" evidence="2">
    <location>
        <begin position="1"/>
        <end position="50"/>
    </location>
</feature>
<feature type="region of interest" description="Disordered" evidence="2">
    <location>
        <begin position="198"/>
        <end position="235"/>
    </location>
</feature>
<feature type="compositionally biased region" description="Polar residues" evidence="2">
    <location>
        <begin position="1"/>
        <end position="18"/>
    </location>
</feature>
<feature type="compositionally biased region" description="Basic and acidic residues" evidence="2">
    <location>
        <begin position="19"/>
        <end position="35"/>
    </location>
</feature>
<feature type="compositionally biased region" description="Polar residues" evidence="2">
    <location>
        <begin position="215"/>
        <end position="235"/>
    </location>
</feature>
<sequence length="235" mass="24533">MTDGNQKPDGNSGEQVTVTDKRRIDPETGEVRHVPPGDMPGGTAAADAAHTEDKVAELTADLQRVQADFANYRKRALRDQQAAADRAKASVVSQLLGVLDDLERARKHGDLESGPLKSVADKLDSALTGLGLVAFGAEGEDFDPVLHEAVQHEGDGGQGSKPVIGTVMRQGYQLGEQVLRHALVGVVDTVVVDAAELESVDDGTAVADTAENDQADQGNSADTSGEQAESEPSGS</sequence>
<evidence type="ECO:0000255" key="1">
    <source>
        <dbReference type="HAMAP-Rule" id="MF_01151"/>
    </source>
</evidence>
<evidence type="ECO:0000256" key="2">
    <source>
        <dbReference type="SAM" id="MobiDB-lite"/>
    </source>
</evidence>
<protein>
    <recommendedName>
        <fullName evidence="1">Protein GrpE</fullName>
    </recommendedName>
    <alternativeName>
        <fullName evidence="1">HSP-70 cofactor</fullName>
    </alternativeName>
</protein>
<gene>
    <name evidence="1" type="primary">grpE</name>
    <name type="ordered locus">MRA_0360</name>
</gene>
<reference key="1">
    <citation type="journal article" date="2008" name="PLoS ONE">
        <title>Genetic basis of virulence attenuation revealed by comparative genomic analysis of Mycobacterium tuberculosis strain H37Ra versus H37Rv.</title>
        <authorList>
            <person name="Zheng H."/>
            <person name="Lu L."/>
            <person name="Wang B."/>
            <person name="Pu S."/>
            <person name="Zhang X."/>
            <person name="Zhu G."/>
            <person name="Shi W."/>
            <person name="Zhang L."/>
            <person name="Wang H."/>
            <person name="Wang S."/>
            <person name="Zhao G."/>
            <person name="Zhang Y."/>
        </authorList>
    </citation>
    <scope>NUCLEOTIDE SEQUENCE [LARGE SCALE GENOMIC DNA]</scope>
    <source>
        <strain>ATCC 25177 / H37Ra</strain>
    </source>
</reference>